<protein>
    <recommendedName>
        <fullName evidence="1">Light-independent protochlorophyllide reductase subunit N</fullName>
        <shortName evidence="1">DPOR subunit N</shortName>
        <shortName evidence="1">LI-POR subunit N</shortName>
        <ecNumber evidence="1">1.3.7.7</ecNumber>
    </recommendedName>
</protein>
<feature type="chain" id="PRO_0000208615" description="Light-independent protochlorophyllide reductase subunit N">
    <location>
        <begin position="1"/>
        <end position="446"/>
    </location>
</feature>
<feature type="binding site" evidence="1">
    <location>
        <position position="22"/>
    </location>
    <ligand>
        <name>[4Fe-4S] cluster</name>
        <dbReference type="ChEBI" id="CHEBI:49883"/>
        <note>ligand shared with heterodimeric partner</note>
    </ligand>
</feature>
<feature type="binding site" evidence="1">
    <location>
        <position position="47"/>
    </location>
    <ligand>
        <name>[4Fe-4S] cluster</name>
        <dbReference type="ChEBI" id="CHEBI:49883"/>
        <note>ligand shared with heterodimeric partner</note>
    </ligand>
</feature>
<feature type="binding site" evidence="1">
    <location>
        <position position="107"/>
    </location>
    <ligand>
        <name>[4Fe-4S] cluster</name>
        <dbReference type="ChEBI" id="CHEBI:49883"/>
        <note>ligand shared with heterodimeric partner</note>
    </ligand>
</feature>
<geneLocation type="chloroplast"/>
<keyword id="KW-0004">4Fe-4S</keyword>
<keyword id="KW-0067">ATP-binding</keyword>
<keyword id="KW-0149">Chlorophyll biosynthesis</keyword>
<keyword id="KW-0150">Chloroplast</keyword>
<keyword id="KW-0408">Iron</keyword>
<keyword id="KW-0411">Iron-sulfur</keyword>
<keyword id="KW-0479">Metal-binding</keyword>
<keyword id="KW-0547">Nucleotide-binding</keyword>
<keyword id="KW-0560">Oxidoreductase</keyword>
<keyword id="KW-0602">Photosynthesis</keyword>
<keyword id="KW-0934">Plastid</keyword>
<proteinExistence type="inferred from homology"/>
<dbReference type="EC" id="1.3.7.7" evidence="1"/>
<dbReference type="EMBL" id="AF166114">
    <property type="protein sequence ID" value="AAF43877.1"/>
    <property type="molecule type" value="Genomic_DNA"/>
</dbReference>
<dbReference type="RefSeq" id="NP_038439.1">
    <property type="nucleotide sequence ID" value="NC_002186.1"/>
</dbReference>
<dbReference type="SMR" id="Q9MUM1"/>
<dbReference type="GeneID" id="800993"/>
<dbReference type="UniPathway" id="UPA00670"/>
<dbReference type="GO" id="GO:0009507">
    <property type="term" value="C:chloroplast"/>
    <property type="evidence" value="ECO:0007669"/>
    <property type="project" value="UniProtKB-SubCell"/>
</dbReference>
<dbReference type="GO" id="GO:0051539">
    <property type="term" value="F:4 iron, 4 sulfur cluster binding"/>
    <property type="evidence" value="ECO:0007669"/>
    <property type="project" value="UniProtKB-UniRule"/>
</dbReference>
<dbReference type="GO" id="GO:0005524">
    <property type="term" value="F:ATP binding"/>
    <property type="evidence" value="ECO:0007669"/>
    <property type="project" value="UniProtKB-UniRule"/>
</dbReference>
<dbReference type="GO" id="GO:0046872">
    <property type="term" value="F:metal ion binding"/>
    <property type="evidence" value="ECO:0007669"/>
    <property type="project" value="UniProtKB-KW"/>
</dbReference>
<dbReference type="GO" id="GO:0016730">
    <property type="term" value="F:oxidoreductase activity, acting on iron-sulfur proteins as donors"/>
    <property type="evidence" value="ECO:0007669"/>
    <property type="project" value="InterPro"/>
</dbReference>
<dbReference type="GO" id="GO:0016636">
    <property type="term" value="F:oxidoreductase activity, acting on the CH-CH group of donors, iron-sulfur protein as acceptor"/>
    <property type="evidence" value="ECO:0007669"/>
    <property type="project" value="UniProtKB-UniRule"/>
</dbReference>
<dbReference type="GO" id="GO:0036068">
    <property type="term" value="P:light-independent chlorophyll biosynthetic process"/>
    <property type="evidence" value="ECO:0007669"/>
    <property type="project" value="UniProtKB-UniRule"/>
</dbReference>
<dbReference type="GO" id="GO:0019685">
    <property type="term" value="P:photosynthesis, dark reaction"/>
    <property type="evidence" value="ECO:0007669"/>
    <property type="project" value="InterPro"/>
</dbReference>
<dbReference type="CDD" id="cd01979">
    <property type="entry name" value="Pchlide_reductase_N"/>
    <property type="match status" value="1"/>
</dbReference>
<dbReference type="Gene3D" id="3.40.50.1980">
    <property type="entry name" value="Nitrogenase molybdenum iron protein domain"/>
    <property type="match status" value="3"/>
</dbReference>
<dbReference type="HAMAP" id="MF_00352">
    <property type="entry name" value="ChlN_BchN"/>
    <property type="match status" value="1"/>
</dbReference>
<dbReference type="InterPro" id="IPR050293">
    <property type="entry name" value="LIPOR_BchN/ChlN"/>
</dbReference>
<dbReference type="InterPro" id="IPR000510">
    <property type="entry name" value="Nase/OxRdtase_comp1"/>
</dbReference>
<dbReference type="InterPro" id="IPR005970">
    <property type="entry name" value="Protochl_reductN"/>
</dbReference>
<dbReference type="NCBIfam" id="TIGR01279">
    <property type="entry name" value="DPOR_bchN"/>
    <property type="match status" value="1"/>
</dbReference>
<dbReference type="NCBIfam" id="NF002768">
    <property type="entry name" value="PRK02842.1"/>
    <property type="match status" value="1"/>
</dbReference>
<dbReference type="PANTHER" id="PTHR39429">
    <property type="entry name" value="LIGHT-INDEPENDENT PROTOCHLOROPHYLLIDE REDUCTASE SUBUNIT N"/>
    <property type="match status" value="1"/>
</dbReference>
<dbReference type="PANTHER" id="PTHR39429:SF3">
    <property type="entry name" value="LIGHT-INDEPENDENT PROTOCHLOROPHYLLIDE REDUCTASE SUBUNIT N"/>
    <property type="match status" value="1"/>
</dbReference>
<dbReference type="Pfam" id="PF00148">
    <property type="entry name" value="Oxidored_nitro"/>
    <property type="match status" value="1"/>
</dbReference>
<dbReference type="PIRSF" id="PIRSF000162">
    <property type="entry name" value="P_chlorophyll_rd"/>
    <property type="match status" value="1"/>
</dbReference>
<dbReference type="SUPFAM" id="SSF53807">
    <property type="entry name" value="Helical backbone' metal receptor"/>
    <property type="match status" value="1"/>
</dbReference>
<organism>
    <name type="scientific">Mesostigma viride</name>
    <name type="common">Green alga</name>
    <dbReference type="NCBI Taxonomy" id="41882"/>
    <lineage>
        <taxon>Eukaryota</taxon>
        <taxon>Viridiplantae</taxon>
        <taxon>Streptophyta</taxon>
        <taxon>Mesostigmatophyceae</taxon>
        <taxon>Mesostigmatales</taxon>
        <taxon>Mesostigmataceae</taxon>
        <taxon>Mesostigma</taxon>
    </lineage>
</organism>
<comment type="function">
    <text evidence="1">Component of the dark-operative protochlorophyllide reductase (DPOR) that uses Mg-ATP and reduced ferredoxin to reduce ring D of protochlorophyllide (Pchlide) to form chlorophyllide a (Chlide). This reaction is light-independent. The NB-protein (ChlN-ChlB) is the catalytic component of the complex.</text>
</comment>
<comment type="catalytic activity">
    <reaction evidence="1">
        <text>chlorophyllide a + oxidized 2[4Fe-4S]-[ferredoxin] + 2 ADP + 2 phosphate = protochlorophyllide a + reduced 2[4Fe-4S]-[ferredoxin] + 2 ATP + 2 H2O</text>
        <dbReference type="Rhea" id="RHEA:28202"/>
        <dbReference type="Rhea" id="RHEA-COMP:10002"/>
        <dbReference type="Rhea" id="RHEA-COMP:10004"/>
        <dbReference type="ChEBI" id="CHEBI:15377"/>
        <dbReference type="ChEBI" id="CHEBI:30616"/>
        <dbReference type="ChEBI" id="CHEBI:33722"/>
        <dbReference type="ChEBI" id="CHEBI:33723"/>
        <dbReference type="ChEBI" id="CHEBI:43474"/>
        <dbReference type="ChEBI" id="CHEBI:83348"/>
        <dbReference type="ChEBI" id="CHEBI:83350"/>
        <dbReference type="ChEBI" id="CHEBI:456216"/>
        <dbReference type="EC" id="1.3.7.7"/>
    </reaction>
</comment>
<comment type="cofactor">
    <cofactor evidence="1">
        <name>[4Fe-4S] cluster</name>
        <dbReference type="ChEBI" id="CHEBI:49883"/>
    </cofactor>
    <text evidence="1">Binds 1 [4Fe-4S] cluster per heterodimer. The cluster is bound at the heterodimer interface by residues from both subunits.</text>
</comment>
<comment type="pathway">
    <text evidence="1">Porphyrin-containing compound metabolism; chlorophyll biosynthesis (light-independent).</text>
</comment>
<comment type="subunit">
    <text evidence="1">Protochlorophyllide reductase is composed of three subunits; ChlL, ChlN and ChlB. Forms a heterotetramer of two ChlB and two ChlN subunits.</text>
</comment>
<comment type="subcellular location">
    <subcellularLocation>
        <location>Plastid</location>
        <location>Chloroplast</location>
    </subcellularLocation>
</comment>
<comment type="similarity">
    <text evidence="1">Belongs to the BchN/ChlN family.</text>
</comment>
<accession>Q9MUM1</accession>
<sequence length="446" mass="50322">MSAVTSDTITFECETGNYHTFCPISCVAWLYQKIEDSFFLVIGTKTCGYFLQNALGVMIFAEPRYAMAELEEGDISAQLNDYKELTRLCNQIKKDRNPSVIVWIGTCTTEIIKMDLEGMAPKIELEINTPIVVARANGLDYAFTQGEDTVLAAMVERCPAKISLDSNSNKESKNPESEQAPLVLFGSLPSTVASQLNLELKRQGINVSGWLPAQRYTDLPILEKGTYVCGINPFLSRTATILMRRRKCKLIGAPFPIGPDGTRAWIEKICSVFNIQPQNLDERENQVWQSLEDYLQLVRGKSVFFMGDNLLEISLARFLIKCGMIVYEIGIPYMDKRYQAAELALLEKHCNDMNVPMPRIVEKPDNYNQIQRIKELQPDLAITGMAHANPLEARGISTKWSVEFTFAQIHGFTNARDILELVTRPLRRNNSLEGLGWNSLVKENIK</sequence>
<evidence type="ECO:0000255" key="1">
    <source>
        <dbReference type="HAMAP-Rule" id="MF_00352"/>
    </source>
</evidence>
<name>CHLN_MESVI</name>
<reference key="1">
    <citation type="journal article" date="2000" name="Nature">
        <title>Ancestral chloroplast genome in Mesostigma viride reveals an early branch of green plant evolution.</title>
        <authorList>
            <person name="Lemieux C."/>
            <person name="Otis C."/>
            <person name="Turmel M."/>
        </authorList>
    </citation>
    <scope>NUCLEOTIDE SEQUENCE [LARGE SCALE GENOMIC DNA]</scope>
    <source>
        <strain>NIES-296 / KY-14 / CCMP 2046</strain>
    </source>
</reference>
<gene>
    <name evidence="1" type="primary">chlN</name>
</gene>